<sequence>MEPFVVHKGKVAGLDRANIDTDQIIPKQFLKRIERTGFGQFLFYDWRYLSDGTPNPHFELNRPENEGATILVANENFGCGSSREHAPWALADYGFRAIIAPSFADIFYNNCLKNSLLPIKLPKEDVAYLLKQAERADYELTISLEQQVVFDDEGFTSSFDIDPYRKQLLLKGWDEIDLTFVYEPYIIAYEKKRS</sequence>
<comment type="function">
    <text evidence="1">Catalyzes the isomerization between 2-isopropylmalate and 3-isopropylmalate, via the formation of 2-isopropylmaleate.</text>
</comment>
<comment type="catalytic activity">
    <reaction evidence="1">
        <text>(2R,3S)-3-isopropylmalate = (2S)-2-isopropylmalate</text>
        <dbReference type="Rhea" id="RHEA:32287"/>
        <dbReference type="ChEBI" id="CHEBI:1178"/>
        <dbReference type="ChEBI" id="CHEBI:35121"/>
        <dbReference type="EC" id="4.2.1.33"/>
    </reaction>
</comment>
<comment type="pathway">
    <text evidence="1">Amino-acid biosynthesis; L-leucine biosynthesis; L-leucine from 3-methyl-2-oxobutanoate: step 2/4.</text>
</comment>
<comment type="subunit">
    <text evidence="1">Heterodimer of LeuC and LeuD.</text>
</comment>
<comment type="similarity">
    <text evidence="1">Belongs to the LeuD family. LeuD type 1 subfamily.</text>
</comment>
<feature type="chain" id="PRO_1000135787" description="3-isopropylmalate dehydratase small subunit">
    <location>
        <begin position="1"/>
        <end position="194"/>
    </location>
</feature>
<accession>B7GH22</accession>
<protein>
    <recommendedName>
        <fullName evidence="1">3-isopropylmalate dehydratase small subunit</fullName>
        <ecNumber evidence="1">4.2.1.33</ecNumber>
    </recommendedName>
    <alternativeName>
        <fullName evidence="1">Alpha-IPM isomerase</fullName>
        <shortName evidence="1">IPMI</shortName>
    </alternativeName>
    <alternativeName>
        <fullName evidence="1">Isopropylmalate isomerase</fullName>
    </alternativeName>
</protein>
<keyword id="KW-0028">Amino-acid biosynthesis</keyword>
<keyword id="KW-0100">Branched-chain amino acid biosynthesis</keyword>
<keyword id="KW-0432">Leucine biosynthesis</keyword>
<keyword id="KW-0456">Lyase</keyword>
<dbReference type="EC" id="4.2.1.33" evidence="1"/>
<dbReference type="EMBL" id="CP000922">
    <property type="protein sequence ID" value="ACJ32978.1"/>
    <property type="molecule type" value="Genomic_DNA"/>
</dbReference>
<dbReference type="RefSeq" id="WP_012574285.1">
    <property type="nucleotide sequence ID" value="NC_011567.1"/>
</dbReference>
<dbReference type="SMR" id="B7GH22"/>
<dbReference type="STRING" id="491915.Aflv_0597"/>
<dbReference type="GeneID" id="7036854"/>
<dbReference type="KEGG" id="afl:Aflv_0597"/>
<dbReference type="PATRIC" id="fig|491915.6.peg.614"/>
<dbReference type="eggNOG" id="COG0066">
    <property type="taxonomic scope" value="Bacteria"/>
</dbReference>
<dbReference type="HOGENOM" id="CLU_081378_0_3_9"/>
<dbReference type="UniPathway" id="UPA00048">
    <property type="reaction ID" value="UER00071"/>
</dbReference>
<dbReference type="Proteomes" id="UP000000742">
    <property type="component" value="Chromosome"/>
</dbReference>
<dbReference type="GO" id="GO:0009316">
    <property type="term" value="C:3-isopropylmalate dehydratase complex"/>
    <property type="evidence" value="ECO:0007669"/>
    <property type="project" value="InterPro"/>
</dbReference>
<dbReference type="GO" id="GO:0003861">
    <property type="term" value="F:3-isopropylmalate dehydratase activity"/>
    <property type="evidence" value="ECO:0007669"/>
    <property type="project" value="UniProtKB-UniRule"/>
</dbReference>
<dbReference type="GO" id="GO:0009098">
    <property type="term" value="P:L-leucine biosynthetic process"/>
    <property type="evidence" value="ECO:0007669"/>
    <property type="project" value="UniProtKB-UniRule"/>
</dbReference>
<dbReference type="CDD" id="cd01577">
    <property type="entry name" value="IPMI_Swivel"/>
    <property type="match status" value="1"/>
</dbReference>
<dbReference type="FunFam" id="3.20.19.10:FF:000003">
    <property type="entry name" value="3-isopropylmalate dehydratase small subunit"/>
    <property type="match status" value="1"/>
</dbReference>
<dbReference type="Gene3D" id="3.20.19.10">
    <property type="entry name" value="Aconitase, domain 4"/>
    <property type="match status" value="1"/>
</dbReference>
<dbReference type="HAMAP" id="MF_01031">
    <property type="entry name" value="LeuD_type1"/>
    <property type="match status" value="1"/>
</dbReference>
<dbReference type="InterPro" id="IPR004431">
    <property type="entry name" value="3-IsopropMal_deHydase_ssu"/>
</dbReference>
<dbReference type="InterPro" id="IPR015928">
    <property type="entry name" value="Aconitase/3IPM_dehydase_swvl"/>
</dbReference>
<dbReference type="InterPro" id="IPR000573">
    <property type="entry name" value="AconitaseA/IPMdHydase_ssu_swvl"/>
</dbReference>
<dbReference type="InterPro" id="IPR033940">
    <property type="entry name" value="IPMI_Swivel"/>
</dbReference>
<dbReference type="InterPro" id="IPR050075">
    <property type="entry name" value="LeuD"/>
</dbReference>
<dbReference type="NCBIfam" id="TIGR00171">
    <property type="entry name" value="leuD"/>
    <property type="match status" value="1"/>
</dbReference>
<dbReference type="NCBIfam" id="NF002458">
    <property type="entry name" value="PRK01641.1"/>
    <property type="match status" value="1"/>
</dbReference>
<dbReference type="PANTHER" id="PTHR43345:SF5">
    <property type="entry name" value="3-ISOPROPYLMALATE DEHYDRATASE SMALL SUBUNIT"/>
    <property type="match status" value="1"/>
</dbReference>
<dbReference type="PANTHER" id="PTHR43345">
    <property type="entry name" value="3-ISOPROPYLMALATE DEHYDRATASE SMALL SUBUNIT 2-RELATED-RELATED"/>
    <property type="match status" value="1"/>
</dbReference>
<dbReference type="Pfam" id="PF00694">
    <property type="entry name" value="Aconitase_C"/>
    <property type="match status" value="1"/>
</dbReference>
<dbReference type="SUPFAM" id="SSF52016">
    <property type="entry name" value="LeuD/IlvD-like"/>
    <property type="match status" value="1"/>
</dbReference>
<name>LEUD_ANOFW</name>
<evidence type="ECO:0000255" key="1">
    <source>
        <dbReference type="HAMAP-Rule" id="MF_01031"/>
    </source>
</evidence>
<organism>
    <name type="scientific">Anoxybacillus flavithermus (strain DSM 21510 / WK1)</name>
    <dbReference type="NCBI Taxonomy" id="491915"/>
    <lineage>
        <taxon>Bacteria</taxon>
        <taxon>Bacillati</taxon>
        <taxon>Bacillota</taxon>
        <taxon>Bacilli</taxon>
        <taxon>Bacillales</taxon>
        <taxon>Anoxybacillaceae</taxon>
        <taxon>Anoxybacillus</taxon>
    </lineage>
</organism>
<reference key="1">
    <citation type="journal article" date="2008" name="Genome Biol.">
        <title>Encapsulated in silica: genome, proteome and physiology of the thermophilic bacterium Anoxybacillus flavithermus WK1.</title>
        <authorList>
            <person name="Saw J.H."/>
            <person name="Mountain B.W."/>
            <person name="Feng L."/>
            <person name="Omelchenko M.V."/>
            <person name="Hou S."/>
            <person name="Saito J.A."/>
            <person name="Stott M.B."/>
            <person name="Li D."/>
            <person name="Zhao G."/>
            <person name="Wu J."/>
            <person name="Galperin M.Y."/>
            <person name="Koonin E.V."/>
            <person name="Makarova K.S."/>
            <person name="Wolf Y.I."/>
            <person name="Rigden D.J."/>
            <person name="Dunfield P.F."/>
            <person name="Wang L."/>
            <person name="Alam M."/>
        </authorList>
    </citation>
    <scope>NUCLEOTIDE SEQUENCE [LARGE SCALE GENOMIC DNA]</scope>
    <source>
        <strain>DSM 21510 / WK1</strain>
    </source>
</reference>
<proteinExistence type="inferred from homology"/>
<gene>
    <name evidence="1" type="primary">leuD</name>
    <name type="ordered locus">Aflv_0597</name>
</gene>